<evidence type="ECO:0000255" key="1">
    <source>
        <dbReference type="HAMAP-Rule" id="MF_00010"/>
    </source>
</evidence>
<organism>
    <name type="scientific">Escherichia coli O157:H7</name>
    <dbReference type="NCBI Taxonomy" id="83334"/>
    <lineage>
        <taxon>Bacteria</taxon>
        <taxon>Pseudomonadati</taxon>
        <taxon>Pseudomonadota</taxon>
        <taxon>Gammaproteobacteria</taxon>
        <taxon>Enterobacterales</taxon>
        <taxon>Enterobacteriaceae</taxon>
        <taxon>Escherichia</taxon>
    </lineage>
</organism>
<reference key="1">
    <citation type="journal article" date="2001" name="Nature">
        <title>Genome sequence of enterohaemorrhagic Escherichia coli O157:H7.</title>
        <authorList>
            <person name="Perna N.T."/>
            <person name="Plunkett G. III"/>
            <person name="Burland V."/>
            <person name="Mau B."/>
            <person name="Glasner J.D."/>
            <person name="Rose D.J."/>
            <person name="Mayhew G.F."/>
            <person name="Evans P.S."/>
            <person name="Gregor J."/>
            <person name="Kirkpatrick H.A."/>
            <person name="Posfai G."/>
            <person name="Hackett J."/>
            <person name="Klink S."/>
            <person name="Boutin A."/>
            <person name="Shao Y."/>
            <person name="Miller L."/>
            <person name="Grotbeck E.J."/>
            <person name="Davis N.W."/>
            <person name="Lim A."/>
            <person name="Dimalanta E.T."/>
            <person name="Potamousis K."/>
            <person name="Apodaca J."/>
            <person name="Anantharaman T.S."/>
            <person name="Lin J."/>
            <person name="Yen G."/>
            <person name="Schwartz D.C."/>
            <person name="Welch R.A."/>
            <person name="Blattner F.R."/>
        </authorList>
    </citation>
    <scope>NUCLEOTIDE SEQUENCE [LARGE SCALE GENOMIC DNA]</scope>
    <source>
        <strain>O157:H7 / EDL933 / ATCC 700927 / EHEC</strain>
    </source>
</reference>
<reference key="2">
    <citation type="journal article" date="2001" name="DNA Res.">
        <title>Complete genome sequence of enterohemorrhagic Escherichia coli O157:H7 and genomic comparison with a laboratory strain K-12.</title>
        <authorList>
            <person name="Hayashi T."/>
            <person name="Makino K."/>
            <person name="Ohnishi M."/>
            <person name="Kurokawa K."/>
            <person name="Ishii K."/>
            <person name="Yokoyama K."/>
            <person name="Han C.-G."/>
            <person name="Ohtsubo E."/>
            <person name="Nakayama K."/>
            <person name="Murata T."/>
            <person name="Tanaka M."/>
            <person name="Tobe T."/>
            <person name="Iida T."/>
            <person name="Takami H."/>
            <person name="Honda T."/>
            <person name="Sasakawa C."/>
            <person name="Ogasawara N."/>
            <person name="Yasunaga T."/>
            <person name="Kuhara S."/>
            <person name="Shiba T."/>
            <person name="Hattori M."/>
            <person name="Shinagawa H."/>
        </authorList>
    </citation>
    <scope>NUCLEOTIDE SEQUENCE [LARGE SCALE GENOMIC DNA]</scope>
    <source>
        <strain>O157:H7 / Sakai / RIMD 0509952 / EHEC</strain>
    </source>
</reference>
<comment type="subcellular location">
    <subcellularLocation>
        <location evidence="1">Cell inner membrane</location>
        <topology evidence="1">Multi-pass membrane protein</topology>
    </subcellularLocation>
</comment>
<comment type="similarity">
    <text evidence="1">Belongs to the UPF0060 family.</text>
</comment>
<feature type="chain" id="PRO_0000162331" description="UPF0060 membrane protein YnfA">
    <location>
        <begin position="1"/>
        <end position="108"/>
    </location>
</feature>
<feature type="topological domain" description="Periplasmic" evidence="1">
    <location>
        <begin position="1"/>
        <end position="5"/>
    </location>
</feature>
<feature type="transmembrane region" description="Helical" evidence="1">
    <location>
        <begin position="6"/>
        <end position="26"/>
    </location>
</feature>
<feature type="topological domain" description="Cytoplasmic" evidence="1">
    <location>
        <begin position="27"/>
        <end position="30"/>
    </location>
</feature>
<feature type="transmembrane region" description="Helical" evidence="1">
    <location>
        <begin position="31"/>
        <end position="51"/>
    </location>
</feature>
<feature type="topological domain" description="Periplasmic" evidence="1">
    <location>
        <begin position="52"/>
        <end position="60"/>
    </location>
</feature>
<feature type="transmembrane region" description="Helical" evidence="1">
    <location>
        <begin position="61"/>
        <end position="81"/>
    </location>
</feature>
<feature type="topological domain" description="Cytoplasmic" evidence="1">
    <location>
        <begin position="82"/>
        <end position="84"/>
    </location>
</feature>
<feature type="transmembrane region" description="Helical" evidence="1">
    <location>
        <begin position="85"/>
        <end position="105"/>
    </location>
</feature>
<feature type="topological domain" description="Periplasmic" evidence="1">
    <location>
        <begin position="106"/>
        <end position="108"/>
    </location>
</feature>
<accession>Q8X7A6</accession>
<proteinExistence type="inferred from homology"/>
<dbReference type="EMBL" id="AE005174">
    <property type="protein sequence ID" value="AAG56569.1"/>
    <property type="molecule type" value="Genomic_DNA"/>
</dbReference>
<dbReference type="EMBL" id="BA000007">
    <property type="protein sequence ID" value="BAB35711.1"/>
    <property type="molecule type" value="Genomic_DNA"/>
</dbReference>
<dbReference type="PIR" id="E85763">
    <property type="entry name" value="E85763"/>
</dbReference>
<dbReference type="PIR" id="H90914">
    <property type="entry name" value="H90914"/>
</dbReference>
<dbReference type="RefSeq" id="NP_310315.1">
    <property type="nucleotide sequence ID" value="NC_002695.1"/>
</dbReference>
<dbReference type="RefSeq" id="WP_001302046.1">
    <property type="nucleotide sequence ID" value="NZ_VOAI01000007.1"/>
</dbReference>
<dbReference type="SMR" id="Q8X7A6"/>
<dbReference type="STRING" id="155864.Z2569"/>
<dbReference type="GeneID" id="914350"/>
<dbReference type="KEGG" id="ece:Z2569"/>
<dbReference type="KEGG" id="ecs:ECs_2288"/>
<dbReference type="PATRIC" id="fig|386585.9.peg.2396"/>
<dbReference type="eggNOG" id="COG1742">
    <property type="taxonomic scope" value="Bacteria"/>
</dbReference>
<dbReference type="HOGENOM" id="CLU_117653_2_1_6"/>
<dbReference type="OMA" id="DLYDWIG"/>
<dbReference type="Proteomes" id="UP000000558">
    <property type="component" value="Chromosome"/>
</dbReference>
<dbReference type="Proteomes" id="UP000002519">
    <property type="component" value="Chromosome"/>
</dbReference>
<dbReference type="GO" id="GO:0005886">
    <property type="term" value="C:plasma membrane"/>
    <property type="evidence" value="ECO:0007669"/>
    <property type="project" value="UniProtKB-SubCell"/>
</dbReference>
<dbReference type="HAMAP" id="MF_00010">
    <property type="entry name" value="UPF0060"/>
    <property type="match status" value="1"/>
</dbReference>
<dbReference type="InterPro" id="IPR003844">
    <property type="entry name" value="UPF0060"/>
</dbReference>
<dbReference type="NCBIfam" id="NF002586">
    <property type="entry name" value="PRK02237.1"/>
    <property type="match status" value="1"/>
</dbReference>
<dbReference type="PANTHER" id="PTHR36116">
    <property type="entry name" value="UPF0060 MEMBRANE PROTEIN YNFA"/>
    <property type="match status" value="1"/>
</dbReference>
<dbReference type="PANTHER" id="PTHR36116:SF1">
    <property type="entry name" value="UPF0060 MEMBRANE PROTEIN YNFA"/>
    <property type="match status" value="1"/>
</dbReference>
<dbReference type="Pfam" id="PF02694">
    <property type="entry name" value="UPF0060"/>
    <property type="match status" value="1"/>
</dbReference>
<dbReference type="SUPFAM" id="SSF103481">
    <property type="entry name" value="Multidrug resistance efflux transporter EmrE"/>
    <property type="match status" value="1"/>
</dbReference>
<name>YNFA_ECO57</name>
<keyword id="KW-0997">Cell inner membrane</keyword>
<keyword id="KW-1003">Cell membrane</keyword>
<keyword id="KW-0472">Membrane</keyword>
<keyword id="KW-1185">Reference proteome</keyword>
<keyword id="KW-0812">Transmembrane</keyword>
<keyword id="KW-1133">Transmembrane helix</keyword>
<gene>
    <name evidence="1" type="primary">ynfA</name>
    <name type="ordered locus">Z2569</name>
    <name type="ordered locus">ECs2288</name>
</gene>
<protein>
    <recommendedName>
        <fullName evidence="1">UPF0060 membrane protein YnfA</fullName>
    </recommendedName>
</protein>
<sequence>MIKTTLLFFATALCEIIGCFLPWLWLKRNASIWLLLPAGISLALFVWLLTLHPAASGRVYAAYGGVYVCTALMWLRVVDGVKLTLYDWTGPLIALCGMLIIVVGWGRT</sequence>